<gene>
    <name type="ordered locus">VP0082</name>
</gene>
<comment type="subcellular location">
    <subcellularLocation>
        <location evidence="1">Cell membrane</location>
        <topology evidence="1">Multi-pass membrane protein</topology>
    </subcellularLocation>
</comment>
<comment type="similarity">
    <text evidence="1">Belongs to the UPF0391 family.</text>
</comment>
<feature type="chain" id="PRO_0000256795" description="UPF0391 membrane protein VP0082">
    <location>
        <begin position="1"/>
        <end position="58"/>
    </location>
</feature>
<feature type="transmembrane region" description="Helical" evidence="1">
    <location>
        <begin position="4"/>
        <end position="24"/>
    </location>
</feature>
<feature type="transmembrane region" description="Helical" evidence="1">
    <location>
        <begin position="30"/>
        <end position="50"/>
    </location>
</feature>
<reference key="1">
    <citation type="journal article" date="2003" name="Lancet">
        <title>Genome sequence of Vibrio parahaemolyticus: a pathogenic mechanism distinct from that of V. cholerae.</title>
        <authorList>
            <person name="Makino K."/>
            <person name="Oshima K."/>
            <person name="Kurokawa K."/>
            <person name="Yokoyama K."/>
            <person name="Uda T."/>
            <person name="Tagomori K."/>
            <person name="Iijima Y."/>
            <person name="Najima M."/>
            <person name="Nakano M."/>
            <person name="Yamashita A."/>
            <person name="Kubota Y."/>
            <person name="Kimura S."/>
            <person name="Yasunaga T."/>
            <person name="Honda T."/>
            <person name="Shinagawa H."/>
            <person name="Hattori M."/>
            <person name="Iida T."/>
        </authorList>
    </citation>
    <scope>NUCLEOTIDE SEQUENCE [LARGE SCALE GENOMIC DNA]</scope>
    <source>
        <strain>RIMD 2210633</strain>
    </source>
</reference>
<evidence type="ECO:0000255" key="1">
    <source>
        <dbReference type="HAMAP-Rule" id="MF_01361"/>
    </source>
</evidence>
<organism>
    <name type="scientific">Vibrio parahaemolyticus serotype O3:K6 (strain RIMD 2210633)</name>
    <dbReference type="NCBI Taxonomy" id="223926"/>
    <lineage>
        <taxon>Bacteria</taxon>
        <taxon>Pseudomonadati</taxon>
        <taxon>Pseudomonadota</taxon>
        <taxon>Gammaproteobacteria</taxon>
        <taxon>Vibrionales</taxon>
        <taxon>Vibrionaceae</taxon>
        <taxon>Vibrio</taxon>
    </lineage>
</organism>
<accession>Q87TI7</accession>
<name>Y082_VIBPA</name>
<sequence>MVRWMFIFLALALVSAVLGFSGIAGAAAAVAQVIFYLFLLSLIVSIVFVILGKKNVNR</sequence>
<keyword id="KW-1003">Cell membrane</keyword>
<keyword id="KW-0472">Membrane</keyword>
<keyword id="KW-0812">Transmembrane</keyword>
<keyword id="KW-1133">Transmembrane helix</keyword>
<proteinExistence type="inferred from homology"/>
<dbReference type="EMBL" id="BA000031">
    <property type="protein sequence ID" value="BAC58345.1"/>
    <property type="molecule type" value="Genomic_DNA"/>
</dbReference>
<dbReference type="RefSeq" id="NP_796461.1">
    <property type="nucleotide sequence ID" value="NC_004603.1"/>
</dbReference>
<dbReference type="RefSeq" id="WP_005478615.1">
    <property type="nucleotide sequence ID" value="NC_004603.1"/>
</dbReference>
<dbReference type="GeneID" id="1187549"/>
<dbReference type="KEGG" id="vpa:VP0082"/>
<dbReference type="eggNOG" id="ENOG50314K6">
    <property type="taxonomic scope" value="Bacteria"/>
</dbReference>
<dbReference type="HOGENOM" id="CLU_187346_1_0_6"/>
<dbReference type="Proteomes" id="UP000002493">
    <property type="component" value="Chromosome 1"/>
</dbReference>
<dbReference type="GO" id="GO:0005886">
    <property type="term" value="C:plasma membrane"/>
    <property type="evidence" value="ECO:0007669"/>
    <property type="project" value="UniProtKB-SubCell"/>
</dbReference>
<dbReference type="HAMAP" id="MF_01361">
    <property type="entry name" value="UPF0391"/>
    <property type="match status" value="1"/>
</dbReference>
<dbReference type="InterPro" id="IPR009760">
    <property type="entry name" value="DUF1328"/>
</dbReference>
<dbReference type="Pfam" id="PF07043">
    <property type="entry name" value="DUF1328"/>
    <property type="match status" value="1"/>
</dbReference>
<dbReference type="PIRSF" id="PIRSF036466">
    <property type="entry name" value="UCP036466"/>
    <property type="match status" value="1"/>
</dbReference>
<protein>
    <recommendedName>
        <fullName evidence="1">UPF0391 membrane protein VP0082</fullName>
    </recommendedName>
</protein>